<accession>P0AF74</accession>
<accession>P39289</accession>
<organism>
    <name type="scientific">Escherichia coli O157:H7</name>
    <dbReference type="NCBI Taxonomy" id="83334"/>
    <lineage>
        <taxon>Bacteria</taxon>
        <taxon>Pseudomonadati</taxon>
        <taxon>Pseudomonadota</taxon>
        <taxon>Gammaproteobacteria</taxon>
        <taxon>Enterobacterales</taxon>
        <taxon>Enterobacteriaceae</taxon>
        <taxon>Escherichia</taxon>
    </lineage>
</organism>
<gene>
    <name type="primary">yjeT</name>
    <name type="ordered locus">Z5783</name>
    <name type="ordered locus">ECs5152</name>
</gene>
<proteinExistence type="predicted"/>
<name>YJET_ECO57</name>
<comment type="subcellular location">
    <subcellularLocation>
        <location evidence="2">Cell membrane</location>
        <topology evidence="2">Multi-pass membrane protein</topology>
    </subcellularLocation>
</comment>
<feature type="chain" id="PRO_0000169744" description="Uncharacterized protein YjeT">
    <location>
        <begin position="1"/>
        <end position="65"/>
    </location>
</feature>
<feature type="transmembrane region" description="Helical" evidence="1">
    <location>
        <begin position="4"/>
        <end position="24"/>
    </location>
</feature>
<feature type="transmembrane region" description="Helical" evidence="1">
    <location>
        <begin position="45"/>
        <end position="65"/>
    </location>
</feature>
<dbReference type="EMBL" id="AE005174">
    <property type="protein sequence ID" value="AAG59372.1"/>
    <property type="molecule type" value="Genomic_DNA"/>
</dbReference>
<dbReference type="EMBL" id="BA000007">
    <property type="protein sequence ID" value="BAB38575.1"/>
    <property type="molecule type" value="Genomic_DNA"/>
</dbReference>
<dbReference type="PIR" id="H91272">
    <property type="entry name" value="H91272"/>
</dbReference>
<dbReference type="RefSeq" id="NP_313179.1">
    <property type="nucleotide sequence ID" value="NC_002695.1"/>
</dbReference>
<dbReference type="RefSeq" id="WP_001089295.1">
    <property type="nucleotide sequence ID" value="NZ_VOAI01000008.1"/>
</dbReference>
<dbReference type="STRING" id="155864.Z5783"/>
<dbReference type="GeneID" id="914051"/>
<dbReference type="KEGG" id="ece:Z5783"/>
<dbReference type="KEGG" id="ecs:ECs_5152"/>
<dbReference type="PATRIC" id="fig|386585.9.peg.5385"/>
<dbReference type="eggNOG" id="COG3242">
    <property type="taxonomic scope" value="Bacteria"/>
</dbReference>
<dbReference type="HOGENOM" id="CLU_179416_0_0_6"/>
<dbReference type="OMA" id="NRWRAYL"/>
<dbReference type="Proteomes" id="UP000000558">
    <property type="component" value="Chromosome"/>
</dbReference>
<dbReference type="Proteomes" id="UP000002519">
    <property type="component" value="Chromosome"/>
</dbReference>
<dbReference type="GO" id="GO:0005886">
    <property type="term" value="C:plasma membrane"/>
    <property type="evidence" value="ECO:0007669"/>
    <property type="project" value="UniProtKB-SubCell"/>
</dbReference>
<dbReference type="InterPro" id="IPR019201">
    <property type="entry name" value="DUF2065"/>
</dbReference>
<dbReference type="PANTHER" id="PTHR38602:SF1">
    <property type="entry name" value="INNER MEMBRANE PROTEIN"/>
    <property type="match status" value="1"/>
</dbReference>
<dbReference type="PANTHER" id="PTHR38602">
    <property type="entry name" value="INNER MEMBRANE PROTEIN-RELATED"/>
    <property type="match status" value="1"/>
</dbReference>
<dbReference type="Pfam" id="PF09838">
    <property type="entry name" value="DUF2065"/>
    <property type="match status" value="1"/>
</dbReference>
<protein>
    <recommendedName>
        <fullName>Uncharacterized protein YjeT</fullName>
    </recommendedName>
</protein>
<sequence length="65" mass="7166">MNSTIWLALALVLVLEGLGPMLYPKAWKKMISAMTNLPDNILRRFGGGLVVAGVVVYYMLRKTIG</sequence>
<evidence type="ECO:0000255" key="1"/>
<evidence type="ECO:0000305" key="2"/>
<reference key="1">
    <citation type="journal article" date="2001" name="Nature">
        <title>Genome sequence of enterohaemorrhagic Escherichia coli O157:H7.</title>
        <authorList>
            <person name="Perna N.T."/>
            <person name="Plunkett G. III"/>
            <person name="Burland V."/>
            <person name="Mau B."/>
            <person name="Glasner J.D."/>
            <person name="Rose D.J."/>
            <person name="Mayhew G.F."/>
            <person name="Evans P.S."/>
            <person name="Gregor J."/>
            <person name="Kirkpatrick H.A."/>
            <person name="Posfai G."/>
            <person name="Hackett J."/>
            <person name="Klink S."/>
            <person name="Boutin A."/>
            <person name="Shao Y."/>
            <person name="Miller L."/>
            <person name="Grotbeck E.J."/>
            <person name="Davis N.W."/>
            <person name="Lim A."/>
            <person name="Dimalanta E.T."/>
            <person name="Potamousis K."/>
            <person name="Apodaca J."/>
            <person name="Anantharaman T.S."/>
            <person name="Lin J."/>
            <person name="Yen G."/>
            <person name="Schwartz D.C."/>
            <person name="Welch R.A."/>
            <person name="Blattner F.R."/>
        </authorList>
    </citation>
    <scope>NUCLEOTIDE SEQUENCE [LARGE SCALE GENOMIC DNA]</scope>
    <source>
        <strain>O157:H7 / EDL933 / ATCC 700927 / EHEC</strain>
    </source>
</reference>
<reference key="2">
    <citation type="journal article" date="2001" name="DNA Res.">
        <title>Complete genome sequence of enterohemorrhagic Escherichia coli O157:H7 and genomic comparison with a laboratory strain K-12.</title>
        <authorList>
            <person name="Hayashi T."/>
            <person name="Makino K."/>
            <person name="Ohnishi M."/>
            <person name="Kurokawa K."/>
            <person name="Ishii K."/>
            <person name="Yokoyama K."/>
            <person name="Han C.-G."/>
            <person name="Ohtsubo E."/>
            <person name="Nakayama K."/>
            <person name="Murata T."/>
            <person name="Tanaka M."/>
            <person name="Tobe T."/>
            <person name="Iida T."/>
            <person name="Takami H."/>
            <person name="Honda T."/>
            <person name="Sasakawa C."/>
            <person name="Ogasawara N."/>
            <person name="Yasunaga T."/>
            <person name="Kuhara S."/>
            <person name="Shiba T."/>
            <person name="Hattori M."/>
            <person name="Shinagawa H."/>
        </authorList>
    </citation>
    <scope>NUCLEOTIDE SEQUENCE [LARGE SCALE GENOMIC DNA]</scope>
    <source>
        <strain>O157:H7 / Sakai / RIMD 0509952 / EHEC</strain>
    </source>
</reference>
<keyword id="KW-1003">Cell membrane</keyword>
<keyword id="KW-0472">Membrane</keyword>
<keyword id="KW-1185">Reference proteome</keyword>
<keyword id="KW-0812">Transmembrane</keyword>
<keyword id="KW-1133">Transmembrane helix</keyword>